<feature type="transit peptide" description="Mitochondrion" evidence="1">
    <location>
        <begin position="1"/>
        <end position="46"/>
    </location>
</feature>
<feature type="chain" id="PRO_0000388132" description="Ubiquinone biosynthesis protein COQ4, mitochondrial">
    <location>
        <begin position="47"/>
        <end position="301"/>
    </location>
</feature>
<feature type="region of interest" description="Disordered" evidence="2">
    <location>
        <begin position="14"/>
        <end position="48"/>
    </location>
</feature>
<feature type="compositionally biased region" description="Polar residues" evidence="2">
    <location>
        <begin position="38"/>
        <end position="48"/>
    </location>
</feature>
<feature type="binding site" evidence="1">
    <location>
        <position position="185"/>
    </location>
    <ligand>
        <name>Zn(2+)</name>
        <dbReference type="ChEBI" id="CHEBI:29105"/>
    </ligand>
</feature>
<feature type="binding site" evidence="1">
    <location>
        <position position="186"/>
    </location>
    <ligand>
        <name>Zn(2+)</name>
        <dbReference type="ChEBI" id="CHEBI:29105"/>
    </ligand>
</feature>
<feature type="binding site" evidence="1">
    <location>
        <position position="189"/>
    </location>
    <ligand>
        <name>Zn(2+)</name>
        <dbReference type="ChEBI" id="CHEBI:29105"/>
    </ligand>
</feature>
<feature type="binding site" evidence="1">
    <location>
        <position position="201"/>
    </location>
    <ligand>
        <name>Zn(2+)</name>
        <dbReference type="ChEBI" id="CHEBI:29105"/>
    </ligand>
</feature>
<protein>
    <recommendedName>
        <fullName evidence="1">Ubiquinone biosynthesis protein COQ4, mitochondrial</fullName>
    </recommendedName>
    <alternativeName>
        <fullName>4-hydroxy-3-methoxy-5-polyprenylbenzoate decarboxylase</fullName>
        <ecNumber evidence="1">4.1.1.130</ecNumber>
    </alternativeName>
    <alternativeName>
        <fullName evidence="1">Coenzyme Q biosynthesis protein 4</fullName>
    </alternativeName>
</protein>
<gene>
    <name evidence="1" type="primary">COQ4</name>
    <name type="ordered locus">Pa_1_17660</name>
    <name type="ORF">PODANS_1_17660</name>
</gene>
<sequence>MEVTLKRSAALARQTTPLLRPLRPVATYPSNNNNNNNPTPQQRRPYSLFSSLTRPPPNYPGHVPLSFVEKTALAIGSGLISLKNPRRGDLIATFAETTSTPYFIYRLRDAMLSSPTGRRILRDRPRITSTSLNLPYLRSLPPNTVGHTYISWLDREGVSPDTRSPVRYIDDEECAYVMQRYRECHDFYHALTGLPVVREGEVALKAFEFANTLLPMTGLSVFSLVGMKKKERERFWGVYGPWAVRNGLRAKEVINVYWEEVLEKDVGELRKELGVEVPADLREMRRREREEKKRREAAARG</sequence>
<evidence type="ECO:0000255" key="1">
    <source>
        <dbReference type="HAMAP-Rule" id="MF_03111"/>
    </source>
</evidence>
<evidence type="ECO:0000256" key="2">
    <source>
        <dbReference type="SAM" id="MobiDB-lite"/>
    </source>
</evidence>
<name>COQ4_PODAN</name>
<proteinExistence type="inferred from homology"/>
<reference key="1">
    <citation type="journal article" date="2008" name="Genome Biol.">
        <title>The genome sequence of the model ascomycete fungus Podospora anserina.</title>
        <authorList>
            <person name="Espagne E."/>
            <person name="Lespinet O."/>
            <person name="Malagnac F."/>
            <person name="Da Silva C."/>
            <person name="Jaillon O."/>
            <person name="Porcel B.M."/>
            <person name="Couloux A."/>
            <person name="Aury J.-M."/>
            <person name="Segurens B."/>
            <person name="Poulain J."/>
            <person name="Anthouard V."/>
            <person name="Grossetete S."/>
            <person name="Khalili H."/>
            <person name="Coppin E."/>
            <person name="Dequard-Chablat M."/>
            <person name="Picard M."/>
            <person name="Contamine V."/>
            <person name="Arnaise S."/>
            <person name="Bourdais A."/>
            <person name="Berteaux-Lecellier V."/>
            <person name="Gautheret D."/>
            <person name="de Vries R.P."/>
            <person name="Battaglia E."/>
            <person name="Coutinho P.M."/>
            <person name="Danchin E.G.J."/>
            <person name="Henrissat B."/>
            <person name="El Khoury R."/>
            <person name="Sainsard-Chanet A."/>
            <person name="Boivin A."/>
            <person name="Pinan-Lucarre B."/>
            <person name="Sellem C.H."/>
            <person name="Debuchy R."/>
            <person name="Wincker P."/>
            <person name="Weissenbach J."/>
            <person name="Silar P."/>
        </authorList>
    </citation>
    <scope>NUCLEOTIDE SEQUENCE [LARGE SCALE GENOMIC DNA]</scope>
    <source>
        <strain>S / ATCC MYA-4624 / DSM 980 / FGSC 10383</strain>
    </source>
</reference>
<reference key="2">
    <citation type="journal article" date="2014" name="Genetics">
        <title>Maintaining two mating types: Structure of the mating type locus and its role in heterokaryosis in Podospora anserina.</title>
        <authorList>
            <person name="Grognet P."/>
            <person name="Bidard F."/>
            <person name="Kuchly C."/>
            <person name="Tong L.C.H."/>
            <person name="Coppin E."/>
            <person name="Benkhali J.A."/>
            <person name="Couloux A."/>
            <person name="Wincker P."/>
            <person name="Debuchy R."/>
            <person name="Silar P."/>
        </authorList>
    </citation>
    <scope>GENOME REANNOTATION</scope>
    <source>
        <strain>S / ATCC MYA-4624 / DSM 980 / FGSC 10383</strain>
    </source>
</reference>
<keyword id="KW-0456">Lyase</keyword>
<keyword id="KW-0472">Membrane</keyword>
<keyword id="KW-0479">Metal-binding</keyword>
<keyword id="KW-0496">Mitochondrion</keyword>
<keyword id="KW-0999">Mitochondrion inner membrane</keyword>
<keyword id="KW-1185">Reference proteome</keyword>
<keyword id="KW-0809">Transit peptide</keyword>
<keyword id="KW-0831">Ubiquinone biosynthesis</keyword>
<keyword id="KW-0862">Zinc</keyword>
<dbReference type="EC" id="4.1.1.130" evidence="1"/>
<dbReference type="EMBL" id="CU633899">
    <property type="protein sequence ID" value="CAP67888.1"/>
    <property type="molecule type" value="Genomic_DNA"/>
</dbReference>
<dbReference type="EMBL" id="FO904936">
    <property type="protein sequence ID" value="CDP24147.1"/>
    <property type="molecule type" value="Genomic_DNA"/>
</dbReference>
<dbReference type="RefSeq" id="XP_001907217.1">
    <property type="nucleotide sequence ID" value="XM_001907182.1"/>
</dbReference>
<dbReference type="SMR" id="B2AU15"/>
<dbReference type="FunCoup" id="B2AU15">
    <property type="interactions" value="509"/>
</dbReference>
<dbReference type="STRING" id="515849.B2AU15"/>
<dbReference type="GeneID" id="6191276"/>
<dbReference type="KEGG" id="pan:PODANSg4250"/>
<dbReference type="VEuPathDB" id="FungiDB:PODANS_1_17660"/>
<dbReference type="eggNOG" id="KOG3244">
    <property type="taxonomic scope" value="Eukaryota"/>
</dbReference>
<dbReference type="HOGENOM" id="CLU_061241_0_0_1"/>
<dbReference type="InParanoid" id="B2AU15"/>
<dbReference type="OrthoDB" id="4249at2759"/>
<dbReference type="UniPathway" id="UPA00232"/>
<dbReference type="Proteomes" id="UP000001197">
    <property type="component" value="Chromosome 1"/>
</dbReference>
<dbReference type="GO" id="GO:0031314">
    <property type="term" value="C:extrinsic component of mitochondrial inner membrane"/>
    <property type="evidence" value="ECO:0007669"/>
    <property type="project" value="UniProtKB-UniRule"/>
</dbReference>
<dbReference type="GO" id="GO:0006744">
    <property type="term" value="P:ubiquinone biosynthetic process"/>
    <property type="evidence" value="ECO:0007669"/>
    <property type="project" value="UniProtKB-UniRule"/>
</dbReference>
<dbReference type="HAMAP" id="MF_03111">
    <property type="entry name" value="Coq4"/>
    <property type="match status" value="1"/>
</dbReference>
<dbReference type="InterPro" id="IPR007715">
    <property type="entry name" value="Coq4"/>
</dbReference>
<dbReference type="InterPro" id="IPR027540">
    <property type="entry name" value="Coq4_euk"/>
</dbReference>
<dbReference type="PANTHER" id="PTHR12922">
    <property type="entry name" value="UBIQUINONE BIOSYNTHESIS PROTEIN"/>
    <property type="match status" value="1"/>
</dbReference>
<dbReference type="PANTHER" id="PTHR12922:SF7">
    <property type="entry name" value="UBIQUINONE BIOSYNTHESIS PROTEIN COQ4 HOMOLOG, MITOCHONDRIAL"/>
    <property type="match status" value="1"/>
</dbReference>
<dbReference type="Pfam" id="PF05019">
    <property type="entry name" value="Coq4"/>
    <property type="match status" value="1"/>
</dbReference>
<organism>
    <name type="scientific">Podospora anserina (strain S / ATCC MYA-4624 / DSM 980 / FGSC 10383)</name>
    <name type="common">Pleurage anserina</name>
    <dbReference type="NCBI Taxonomy" id="515849"/>
    <lineage>
        <taxon>Eukaryota</taxon>
        <taxon>Fungi</taxon>
        <taxon>Dikarya</taxon>
        <taxon>Ascomycota</taxon>
        <taxon>Pezizomycotina</taxon>
        <taxon>Sordariomycetes</taxon>
        <taxon>Sordariomycetidae</taxon>
        <taxon>Sordariales</taxon>
        <taxon>Podosporaceae</taxon>
        <taxon>Podospora</taxon>
        <taxon>Podospora anserina</taxon>
    </lineage>
</organism>
<comment type="function">
    <text evidence="1">Lyase that catalyzes the C1-decarboxylation of 4-hydroxy-3-methoxy-5-(all-trans-polyprenyl)benzoic acid into 2-methoxy-6-(all-trans-polyprenyl)phenol during ubiquinone biosynthesis.</text>
</comment>
<comment type="catalytic activity">
    <reaction evidence="1">
        <text>a 4-hydroxy-3-methoxy-5-(all-trans-polyprenyl)benzoate + H(+) = a 2-methoxy-6-(all-trans-polyprenyl)phenol + CO2</text>
        <dbReference type="Rhea" id="RHEA:81179"/>
        <dbReference type="Rhea" id="RHEA-COMP:9551"/>
        <dbReference type="Rhea" id="RHEA-COMP:10931"/>
        <dbReference type="ChEBI" id="CHEBI:15378"/>
        <dbReference type="ChEBI" id="CHEBI:16526"/>
        <dbReference type="ChEBI" id="CHEBI:62731"/>
        <dbReference type="ChEBI" id="CHEBI:84443"/>
        <dbReference type="EC" id="4.1.1.130"/>
    </reaction>
</comment>
<comment type="cofactor">
    <cofactor evidence="1">
        <name>Zn(2+)</name>
        <dbReference type="ChEBI" id="CHEBI:29105"/>
    </cofactor>
</comment>
<comment type="pathway">
    <text evidence="1">Cofactor biosynthesis; ubiquinone biosynthesis.</text>
</comment>
<comment type="subunit">
    <text evidence="1">Component of a multi-subunit COQ enzyme complex, composed of at least COQ3, COQ4, COQ5, COQ6, COQ7 and COQ9.</text>
</comment>
<comment type="subcellular location">
    <subcellularLocation>
        <location evidence="1">Mitochondrion inner membrane</location>
        <topology evidence="1">Peripheral membrane protein</topology>
        <orientation evidence="1">Matrix side</orientation>
    </subcellularLocation>
</comment>
<comment type="similarity">
    <text evidence="1">Belongs to the COQ4 family.</text>
</comment>
<accession>B2AU15</accession>
<accession>A0A090CFN4</accession>